<comment type="function">
    <text evidence="1">Involved in peptide bond synthesis. Stimulates efficient translation and peptide-bond synthesis on native or reconstituted 70S ribosomes in vitro. Probably functions indirectly by altering the affinity of the ribosome for aminoacyl-tRNA, thus increasing their reactivity as acceptors for peptidyl transferase.</text>
</comment>
<comment type="pathway">
    <text evidence="1">Protein biosynthesis; polypeptide chain elongation.</text>
</comment>
<comment type="subcellular location">
    <subcellularLocation>
        <location evidence="1">Cytoplasm</location>
    </subcellularLocation>
</comment>
<comment type="similarity">
    <text evidence="1">Belongs to the elongation factor P family.</text>
</comment>
<keyword id="KW-0963">Cytoplasm</keyword>
<keyword id="KW-0251">Elongation factor</keyword>
<keyword id="KW-0648">Protein biosynthesis</keyword>
<keyword id="KW-1185">Reference proteome</keyword>
<reference key="1">
    <citation type="journal article" date="2004" name="Mol. Plant Microbe Interact.">
        <title>The genome sequence of the Gram-positive sugarcane pathogen Leifsonia xyli subsp. xyli.</title>
        <authorList>
            <person name="Monteiro-Vitorello C.B."/>
            <person name="Camargo L.E.A."/>
            <person name="Van Sluys M.A."/>
            <person name="Kitajima J.P."/>
            <person name="Truffi D."/>
            <person name="do Amaral A.M."/>
            <person name="Harakava R."/>
            <person name="de Oliveira J.C.F."/>
            <person name="Wood D."/>
            <person name="de Oliveira M.C."/>
            <person name="Miyaki C.Y."/>
            <person name="Takita M.A."/>
            <person name="da Silva A.C.R."/>
            <person name="Furlan L.R."/>
            <person name="Carraro D.M."/>
            <person name="Camarotte G."/>
            <person name="Almeida N.F. Jr."/>
            <person name="Carrer H."/>
            <person name="Coutinho L.L."/>
            <person name="El-Dorry H.A."/>
            <person name="Ferro M.I.T."/>
            <person name="Gagliardi P.R."/>
            <person name="Giglioti E."/>
            <person name="Goldman M.H.S."/>
            <person name="Goldman G.H."/>
            <person name="Kimura E.T."/>
            <person name="Ferro E.S."/>
            <person name="Kuramae E.E."/>
            <person name="Lemos E.G.M."/>
            <person name="Lemos M.V.F."/>
            <person name="Mauro S.M.Z."/>
            <person name="Machado M.A."/>
            <person name="Marino C.L."/>
            <person name="Menck C.F."/>
            <person name="Nunes L.R."/>
            <person name="Oliveira R.C."/>
            <person name="Pereira G.G."/>
            <person name="Siqueira W."/>
            <person name="de Souza A.A."/>
            <person name="Tsai S.M."/>
            <person name="Zanca A.S."/>
            <person name="Simpson A.J.G."/>
            <person name="Brumbley S.M."/>
            <person name="Setubal J.C."/>
        </authorList>
    </citation>
    <scope>NUCLEOTIDE SEQUENCE [LARGE SCALE GENOMIC DNA]</scope>
    <source>
        <strain>CTCB07</strain>
    </source>
</reference>
<feature type="chain" id="PRO_0000094272" description="Elongation factor P">
    <location>
        <begin position="1"/>
        <end position="187"/>
    </location>
</feature>
<gene>
    <name evidence="1" type="primary">efp</name>
    <name type="ordered locus">Lxx11000</name>
</gene>
<protein>
    <recommendedName>
        <fullName evidence="1">Elongation factor P</fullName>
        <shortName evidence="1">EF-P</shortName>
    </recommendedName>
</protein>
<sequence length="187" mass="20467">MASTADIKNGIVINIDGQLWSVIEFQHVKPGKGGAFVRTKLKNVTTGKTVDRTYNAGAKIDITNVDRRDYQYLYQDGADFVFMDTSDYDQITIPGPIVGDAANFMLENQNVTVALHEGSPLYVELPASVVLEITYTEPGLQGDRSTGGTKPATVQTGYQIQVPLFLETGTKVRVDTRTGDYLGRVND</sequence>
<evidence type="ECO:0000255" key="1">
    <source>
        <dbReference type="HAMAP-Rule" id="MF_00141"/>
    </source>
</evidence>
<organism>
    <name type="scientific">Leifsonia xyli subsp. xyli (strain CTCB07)</name>
    <dbReference type="NCBI Taxonomy" id="281090"/>
    <lineage>
        <taxon>Bacteria</taxon>
        <taxon>Bacillati</taxon>
        <taxon>Actinomycetota</taxon>
        <taxon>Actinomycetes</taxon>
        <taxon>Micrococcales</taxon>
        <taxon>Microbacteriaceae</taxon>
        <taxon>Leifsonia</taxon>
    </lineage>
</organism>
<proteinExistence type="inferred from homology"/>
<name>EFP_LEIXX</name>
<dbReference type="EMBL" id="AE016822">
    <property type="protein sequence ID" value="AAT88953.1"/>
    <property type="molecule type" value="Genomic_DNA"/>
</dbReference>
<dbReference type="RefSeq" id="WP_011185949.1">
    <property type="nucleotide sequence ID" value="NC_006087.1"/>
</dbReference>
<dbReference type="SMR" id="Q6AF92"/>
<dbReference type="STRING" id="281090.Lxx11000"/>
<dbReference type="KEGG" id="lxx:Lxx11000"/>
<dbReference type="eggNOG" id="COG0231">
    <property type="taxonomic scope" value="Bacteria"/>
</dbReference>
<dbReference type="HOGENOM" id="CLU_074944_0_1_11"/>
<dbReference type="UniPathway" id="UPA00345"/>
<dbReference type="Proteomes" id="UP000001306">
    <property type="component" value="Chromosome"/>
</dbReference>
<dbReference type="GO" id="GO:0005737">
    <property type="term" value="C:cytoplasm"/>
    <property type="evidence" value="ECO:0007669"/>
    <property type="project" value="UniProtKB-SubCell"/>
</dbReference>
<dbReference type="GO" id="GO:0003746">
    <property type="term" value="F:translation elongation factor activity"/>
    <property type="evidence" value="ECO:0007669"/>
    <property type="project" value="UniProtKB-UniRule"/>
</dbReference>
<dbReference type="GO" id="GO:0043043">
    <property type="term" value="P:peptide biosynthetic process"/>
    <property type="evidence" value="ECO:0007669"/>
    <property type="project" value="InterPro"/>
</dbReference>
<dbReference type="CDD" id="cd04470">
    <property type="entry name" value="S1_EF-P_repeat_1"/>
    <property type="match status" value="1"/>
</dbReference>
<dbReference type="CDD" id="cd05794">
    <property type="entry name" value="S1_EF-P_repeat_2"/>
    <property type="match status" value="1"/>
</dbReference>
<dbReference type="FunFam" id="2.30.30.30:FF:000003">
    <property type="entry name" value="Elongation factor P"/>
    <property type="match status" value="1"/>
</dbReference>
<dbReference type="FunFam" id="2.40.50.140:FF:000004">
    <property type="entry name" value="Elongation factor P"/>
    <property type="match status" value="1"/>
</dbReference>
<dbReference type="FunFam" id="2.40.50.140:FF:000009">
    <property type="entry name" value="Elongation factor P"/>
    <property type="match status" value="1"/>
</dbReference>
<dbReference type="Gene3D" id="2.30.30.30">
    <property type="match status" value="1"/>
</dbReference>
<dbReference type="Gene3D" id="2.40.50.140">
    <property type="entry name" value="Nucleic acid-binding proteins"/>
    <property type="match status" value="2"/>
</dbReference>
<dbReference type="HAMAP" id="MF_00141">
    <property type="entry name" value="EF_P"/>
    <property type="match status" value="1"/>
</dbReference>
<dbReference type="InterPro" id="IPR015365">
    <property type="entry name" value="Elong-fact-P_C"/>
</dbReference>
<dbReference type="InterPro" id="IPR012340">
    <property type="entry name" value="NA-bd_OB-fold"/>
</dbReference>
<dbReference type="InterPro" id="IPR014722">
    <property type="entry name" value="Rib_uL2_dom2"/>
</dbReference>
<dbReference type="InterPro" id="IPR020599">
    <property type="entry name" value="Transl_elong_fac_P/YeiP"/>
</dbReference>
<dbReference type="InterPro" id="IPR013185">
    <property type="entry name" value="Transl_elong_KOW-like"/>
</dbReference>
<dbReference type="InterPro" id="IPR001059">
    <property type="entry name" value="Transl_elong_P/YeiP_cen"/>
</dbReference>
<dbReference type="InterPro" id="IPR013852">
    <property type="entry name" value="Transl_elong_P/YeiP_CS"/>
</dbReference>
<dbReference type="InterPro" id="IPR011768">
    <property type="entry name" value="Transl_elongation_fac_P"/>
</dbReference>
<dbReference type="InterPro" id="IPR008991">
    <property type="entry name" value="Translation_prot_SH3-like_sf"/>
</dbReference>
<dbReference type="NCBIfam" id="TIGR00038">
    <property type="entry name" value="efp"/>
    <property type="match status" value="1"/>
</dbReference>
<dbReference type="NCBIfam" id="NF001810">
    <property type="entry name" value="PRK00529.1"/>
    <property type="match status" value="1"/>
</dbReference>
<dbReference type="PANTHER" id="PTHR30053">
    <property type="entry name" value="ELONGATION FACTOR P"/>
    <property type="match status" value="1"/>
</dbReference>
<dbReference type="PANTHER" id="PTHR30053:SF12">
    <property type="entry name" value="ELONGATION FACTOR P (EF-P) FAMILY PROTEIN"/>
    <property type="match status" value="1"/>
</dbReference>
<dbReference type="Pfam" id="PF01132">
    <property type="entry name" value="EFP"/>
    <property type="match status" value="1"/>
</dbReference>
<dbReference type="Pfam" id="PF08207">
    <property type="entry name" value="EFP_N"/>
    <property type="match status" value="1"/>
</dbReference>
<dbReference type="Pfam" id="PF09285">
    <property type="entry name" value="Elong-fact-P_C"/>
    <property type="match status" value="1"/>
</dbReference>
<dbReference type="PIRSF" id="PIRSF005901">
    <property type="entry name" value="EF-P"/>
    <property type="match status" value="1"/>
</dbReference>
<dbReference type="SMART" id="SM01185">
    <property type="entry name" value="EFP"/>
    <property type="match status" value="1"/>
</dbReference>
<dbReference type="SMART" id="SM00841">
    <property type="entry name" value="Elong-fact-P_C"/>
    <property type="match status" value="1"/>
</dbReference>
<dbReference type="SUPFAM" id="SSF50249">
    <property type="entry name" value="Nucleic acid-binding proteins"/>
    <property type="match status" value="2"/>
</dbReference>
<dbReference type="SUPFAM" id="SSF50104">
    <property type="entry name" value="Translation proteins SH3-like domain"/>
    <property type="match status" value="1"/>
</dbReference>
<dbReference type="PROSITE" id="PS01275">
    <property type="entry name" value="EFP"/>
    <property type="match status" value="1"/>
</dbReference>
<accession>Q6AF92</accession>